<evidence type="ECO:0000255" key="1">
    <source>
        <dbReference type="HAMAP-Rule" id="MF_02006"/>
    </source>
</evidence>
<protein>
    <recommendedName>
        <fullName evidence="1">Tyrosine--tRNA ligase</fullName>
        <ecNumber evidence="1">6.1.1.1</ecNumber>
    </recommendedName>
    <alternativeName>
        <fullName evidence="1">Tyrosyl-tRNA synthetase</fullName>
        <shortName evidence="1">TyrRS</shortName>
    </alternativeName>
</protein>
<sequence>MNIIDELKWRGALNQATDEEGLRELTEEKKIALYCGTDPSGDSLHIGHLIPFMMLKRFQLAGHKPVILIGGGTGAIGDPSGRKTERDLETRSKLEQNVQSLTKQMIRLFGTENFTIVNNYDWLSKFTMIDFLRDYGKLFNLNTMLNKEVVASRLDAGISFTEFTYQILQAIDFLHLYRHNDVQLQIGGSDQWGNITSGIDLIHKVEGSDTKVFGVTIPLMLKADGTKFGKTAGGAVWLDPEKTSPYEFYQFWLNQDDRDVVKYLKYFTFLSQEEIAGLEEKVQTEPWKREAQRRLAQEVTTFVHGQAATDQAEKISAILFSGNIQDLTTAEVEQAFAGTPSVEVSAEPANIVDWLVDTKIEPSKRQAREDVKNGAIRVNGEKVTDLEATLDPTAKFDGKYVVIRRGKKNYTLAKVHA</sequence>
<feature type="chain" id="PRO_1000189301" description="Tyrosine--tRNA ligase">
    <location>
        <begin position="1"/>
        <end position="417"/>
    </location>
</feature>
<feature type="domain" description="S4 RNA-binding" evidence="1">
    <location>
        <begin position="349"/>
        <end position="415"/>
    </location>
</feature>
<feature type="short sequence motif" description="'HIGH' region">
    <location>
        <begin position="39"/>
        <end position="48"/>
    </location>
</feature>
<feature type="short sequence motif" description="'KMSKS' region">
    <location>
        <begin position="227"/>
        <end position="231"/>
    </location>
</feature>
<feature type="binding site" evidence="1">
    <location>
        <position position="34"/>
    </location>
    <ligand>
        <name>L-tyrosine</name>
        <dbReference type="ChEBI" id="CHEBI:58315"/>
    </ligand>
</feature>
<feature type="binding site" evidence="1">
    <location>
        <position position="165"/>
    </location>
    <ligand>
        <name>L-tyrosine</name>
        <dbReference type="ChEBI" id="CHEBI:58315"/>
    </ligand>
</feature>
<feature type="binding site" evidence="1">
    <location>
        <position position="169"/>
    </location>
    <ligand>
        <name>L-tyrosine</name>
        <dbReference type="ChEBI" id="CHEBI:58315"/>
    </ligand>
</feature>
<feature type="binding site" evidence="1">
    <location>
        <position position="230"/>
    </location>
    <ligand>
        <name>ATP</name>
        <dbReference type="ChEBI" id="CHEBI:30616"/>
    </ligand>
</feature>
<gene>
    <name evidence="1" type="primary">tyrS</name>
    <name type="ordered locus">LAF_0068</name>
</gene>
<reference key="1">
    <citation type="journal article" date="2008" name="DNA Res.">
        <title>Comparative genome analysis of Lactobacillus reuteri and Lactobacillus fermentum reveal a genomic island for reuterin and cobalamin production.</title>
        <authorList>
            <person name="Morita H."/>
            <person name="Toh H."/>
            <person name="Fukuda S."/>
            <person name="Horikawa H."/>
            <person name="Oshima K."/>
            <person name="Suzuki T."/>
            <person name="Murakami M."/>
            <person name="Hisamatsu S."/>
            <person name="Kato Y."/>
            <person name="Takizawa T."/>
            <person name="Fukuoka H."/>
            <person name="Yoshimura T."/>
            <person name="Itoh K."/>
            <person name="O'Sullivan D.J."/>
            <person name="McKay L.L."/>
            <person name="Ohno H."/>
            <person name="Kikuchi J."/>
            <person name="Masaoka T."/>
            <person name="Hattori M."/>
        </authorList>
    </citation>
    <scope>NUCLEOTIDE SEQUENCE [LARGE SCALE GENOMIC DNA]</scope>
    <source>
        <strain>NBRC 3956 / LMG 18251</strain>
    </source>
</reference>
<comment type="function">
    <text evidence="1">Catalyzes the attachment of tyrosine to tRNA(Tyr) in a two-step reaction: tyrosine is first activated by ATP to form Tyr-AMP and then transferred to the acceptor end of tRNA(Tyr).</text>
</comment>
<comment type="catalytic activity">
    <reaction evidence="1">
        <text>tRNA(Tyr) + L-tyrosine + ATP = L-tyrosyl-tRNA(Tyr) + AMP + diphosphate + H(+)</text>
        <dbReference type="Rhea" id="RHEA:10220"/>
        <dbReference type="Rhea" id="RHEA-COMP:9706"/>
        <dbReference type="Rhea" id="RHEA-COMP:9707"/>
        <dbReference type="ChEBI" id="CHEBI:15378"/>
        <dbReference type="ChEBI" id="CHEBI:30616"/>
        <dbReference type="ChEBI" id="CHEBI:33019"/>
        <dbReference type="ChEBI" id="CHEBI:58315"/>
        <dbReference type="ChEBI" id="CHEBI:78442"/>
        <dbReference type="ChEBI" id="CHEBI:78536"/>
        <dbReference type="ChEBI" id="CHEBI:456215"/>
        <dbReference type="EC" id="6.1.1.1"/>
    </reaction>
</comment>
<comment type="subunit">
    <text evidence="1">Homodimer.</text>
</comment>
<comment type="subcellular location">
    <subcellularLocation>
        <location evidence="1">Cytoplasm</location>
    </subcellularLocation>
</comment>
<comment type="similarity">
    <text evidence="1">Belongs to the class-I aminoacyl-tRNA synthetase family. TyrS type 1 subfamily.</text>
</comment>
<organism>
    <name type="scientific">Limosilactobacillus fermentum (strain NBRC 3956 / LMG 18251)</name>
    <name type="common">Lactobacillus fermentum</name>
    <dbReference type="NCBI Taxonomy" id="334390"/>
    <lineage>
        <taxon>Bacteria</taxon>
        <taxon>Bacillati</taxon>
        <taxon>Bacillota</taxon>
        <taxon>Bacilli</taxon>
        <taxon>Lactobacillales</taxon>
        <taxon>Lactobacillaceae</taxon>
        <taxon>Limosilactobacillus</taxon>
    </lineage>
</organism>
<name>SYY_LIMF3</name>
<accession>B2GF15</accession>
<keyword id="KW-0030">Aminoacyl-tRNA synthetase</keyword>
<keyword id="KW-0067">ATP-binding</keyword>
<keyword id="KW-0963">Cytoplasm</keyword>
<keyword id="KW-0436">Ligase</keyword>
<keyword id="KW-0547">Nucleotide-binding</keyword>
<keyword id="KW-0648">Protein biosynthesis</keyword>
<keyword id="KW-1185">Reference proteome</keyword>
<keyword id="KW-0694">RNA-binding</keyword>
<dbReference type="EC" id="6.1.1.1" evidence="1"/>
<dbReference type="EMBL" id="AP008937">
    <property type="protein sequence ID" value="BAG26404.1"/>
    <property type="molecule type" value="Genomic_DNA"/>
</dbReference>
<dbReference type="RefSeq" id="WP_003682407.1">
    <property type="nucleotide sequence ID" value="NC_010610.1"/>
</dbReference>
<dbReference type="SMR" id="B2GF15"/>
<dbReference type="KEGG" id="lfe:LAF_0068"/>
<dbReference type="eggNOG" id="COG0162">
    <property type="taxonomic scope" value="Bacteria"/>
</dbReference>
<dbReference type="HOGENOM" id="CLU_024003_0_3_9"/>
<dbReference type="Proteomes" id="UP000001697">
    <property type="component" value="Chromosome"/>
</dbReference>
<dbReference type="GO" id="GO:0005829">
    <property type="term" value="C:cytosol"/>
    <property type="evidence" value="ECO:0007669"/>
    <property type="project" value="TreeGrafter"/>
</dbReference>
<dbReference type="GO" id="GO:0005524">
    <property type="term" value="F:ATP binding"/>
    <property type="evidence" value="ECO:0007669"/>
    <property type="project" value="UniProtKB-UniRule"/>
</dbReference>
<dbReference type="GO" id="GO:0003723">
    <property type="term" value="F:RNA binding"/>
    <property type="evidence" value="ECO:0007669"/>
    <property type="project" value="UniProtKB-KW"/>
</dbReference>
<dbReference type="GO" id="GO:0004831">
    <property type="term" value="F:tyrosine-tRNA ligase activity"/>
    <property type="evidence" value="ECO:0007669"/>
    <property type="project" value="UniProtKB-UniRule"/>
</dbReference>
<dbReference type="GO" id="GO:0006437">
    <property type="term" value="P:tyrosyl-tRNA aminoacylation"/>
    <property type="evidence" value="ECO:0007669"/>
    <property type="project" value="UniProtKB-UniRule"/>
</dbReference>
<dbReference type="CDD" id="cd00165">
    <property type="entry name" value="S4"/>
    <property type="match status" value="1"/>
</dbReference>
<dbReference type="CDD" id="cd00805">
    <property type="entry name" value="TyrRS_core"/>
    <property type="match status" value="1"/>
</dbReference>
<dbReference type="FunFam" id="1.10.240.10:FF:000001">
    <property type="entry name" value="Tyrosine--tRNA ligase"/>
    <property type="match status" value="1"/>
</dbReference>
<dbReference type="FunFam" id="3.40.50.620:FF:000008">
    <property type="entry name" value="Tyrosine--tRNA ligase"/>
    <property type="match status" value="1"/>
</dbReference>
<dbReference type="Gene3D" id="3.40.50.620">
    <property type="entry name" value="HUPs"/>
    <property type="match status" value="1"/>
</dbReference>
<dbReference type="Gene3D" id="3.10.290.10">
    <property type="entry name" value="RNA-binding S4 domain"/>
    <property type="match status" value="1"/>
</dbReference>
<dbReference type="Gene3D" id="1.10.240.10">
    <property type="entry name" value="Tyrosyl-Transfer RNA Synthetase"/>
    <property type="match status" value="1"/>
</dbReference>
<dbReference type="HAMAP" id="MF_02006">
    <property type="entry name" value="Tyr_tRNA_synth_type1"/>
    <property type="match status" value="1"/>
</dbReference>
<dbReference type="InterPro" id="IPR001412">
    <property type="entry name" value="aa-tRNA-synth_I_CS"/>
</dbReference>
<dbReference type="InterPro" id="IPR002305">
    <property type="entry name" value="aa-tRNA-synth_Ic"/>
</dbReference>
<dbReference type="InterPro" id="IPR014729">
    <property type="entry name" value="Rossmann-like_a/b/a_fold"/>
</dbReference>
<dbReference type="InterPro" id="IPR002942">
    <property type="entry name" value="S4_RNA-bd"/>
</dbReference>
<dbReference type="InterPro" id="IPR036986">
    <property type="entry name" value="S4_RNA-bd_sf"/>
</dbReference>
<dbReference type="InterPro" id="IPR054608">
    <property type="entry name" value="SYY-like_C"/>
</dbReference>
<dbReference type="InterPro" id="IPR002307">
    <property type="entry name" value="Tyr-tRNA-ligase"/>
</dbReference>
<dbReference type="InterPro" id="IPR024088">
    <property type="entry name" value="Tyr-tRNA-ligase_bac-type"/>
</dbReference>
<dbReference type="InterPro" id="IPR024107">
    <property type="entry name" value="Tyr-tRNA-ligase_bac_1"/>
</dbReference>
<dbReference type="NCBIfam" id="TIGR00234">
    <property type="entry name" value="tyrS"/>
    <property type="match status" value="1"/>
</dbReference>
<dbReference type="PANTHER" id="PTHR11766:SF0">
    <property type="entry name" value="TYROSINE--TRNA LIGASE, MITOCHONDRIAL"/>
    <property type="match status" value="1"/>
</dbReference>
<dbReference type="PANTHER" id="PTHR11766">
    <property type="entry name" value="TYROSYL-TRNA SYNTHETASE"/>
    <property type="match status" value="1"/>
</dbReference>
<dbReference type="Pfam" id="PF22421">
    <property type="entry name" value="SYY_C-terminal"/>
    <property type="match status" value="1"/>
</dbReference>
<dbReference type="Pfam" id="PF00579">
    <property type="entry name" value="tRNA-synt_1b"/>
    <property type="match status" value="1"/>
</dbReference>
<dbReference type="PRINTS" id="PR01040">
    <property type="entry name" value="TRNASYNTHTYR"/>
</dbReference>
<dbReference type="SMART" id="SM00363">
    <property type="entry name" value="S4"/>
    <property type="match status" value="1"/>
</dbReference>
<dbReference type="SUPFAM" id="SSF55174">
    <property type="entry name" value="Alpha-L RNA-binding motif"/>
    <property type="match status" value="1"/>
</dbReference>
<dbReference type="SUPFAM" id="SSF52374">
    <property type="entry name" value="Nucleotidylyl transferase"/>
    <property type="match status" value="1"/>
</dbReference>
<dbReference type="PROSITE" id="PS00178">
    <property type="entry name" value="AA_TRNA_LIGASE_I"/>
    <property type="match status" value="1"/>
</dbReference>
<dbReference type="PROSITE" id="PS50889">
    <property type="entry name" value="S4"/>
    <property type="match status" value="1"/>
</dbReference>
<proteinExistence type="inferred from homology"/>